<organism>
    <name type="scientific">Trichodesmium erythraeum (strain IMS101)</name>
    <dbReference type="NCBI Taxonomy" id="203124"/>
    <lineage>
        <taxon>Bacteria</taxon>
        <taxon>Bacillati</taxon>
        <taxon>Cyanobacteriota</taxon>
        <taxon>Cyanophyceae</taxon>
        <taxon>Oscillatoriophycideae</taxon>
        <taxon>Oscillatoriales</taxon>
        <taxon>Microcoleaceae</taxon>
        <taxon>Trichodesmium</taxon>
    </lineage>
</organism>
<evidence type="ECO:0000255" key="1">
    <source>
        <dbReference type="HAMAP-Rule" id="MF_01393"/>
    </source>
</evidence>
<name>ATP6_TRIEI</name>
<feature type="chain" id="PRO_0000362496" description="ATP synthase subunit a">
    <location>
        <begin position="1"/>
        <end position="249"/>
    </location>
</feature>
<feature type="transmembrane region" description="Helical" evidence="1">
    <location>
        <begin position="35"/>
        <end position="55"/>
    </location>
</feature>
<feature type="transmembrane region" description="Helical" evidence="1">
    <location>
        <begin position="92"/>
        <end position="112"/>
    </location>
</feature>
<feature type="transmembrane region" description="Helical" evidence="1">
    <location>
        <begin position="131"/>
        <end position="151"/>
    </location>
</feature>
<feature type="transmembrane region" description="Helical" evidence="1">
    <location>
        <begin position="187"/>
        <end position="209"/>
    </location>
</feature>
<feature type="transmembrane region" description="Helical" evidence="1">
    <location>
        <begin position="221"/>
        <end position="241"/>
    </location>
</feature>
<comment type="function">
    <text evidence="1">Key component of the proton channel; it plays a direct role in the translocation of protons across the membrane.</text>
</comment>
<comment type="subunit">
    <text evidence="1">F-type ATPases have 2 components, CF(1) - the catalytic core - and CF(0) - the membrane proton channel. CF(1) has five subunits: alpha(3), beta(3), gamma(1), delta(1), epsilon(1). CF(0) has four main subunits: a, b, b' and c.</text>
</comment>
<comment type="subcellular location">
    <subcellularLocation>
        <location evidence="1">Cellular thylakoid membrane</location>
        <topology evidence="1">Multi-pass membrane protein</topology>
    </subcellularLocation>
</comment>
<comment type="similarity">
    <text evidence="1">Belongs to the ATPase A chain family.</text>
</comment>
<accession>Q112Z1</accession>
<protein>
    <recommendedName>
        <fullName evidence="1">ATP synthase subunit a</fullName>
    </recommendedName>
    <alternativeName>
        <fullName evidence="1">ATP synthase F0 sector subunit a</fullName>
    </alternativeName>
    <alternativeName>
        <fullName evidence="1">F-ATPase subunit 6</fullName>
    </alternativeName>
</protein>
<proteinExistence type="inferred from homology"/>
<sequence length="249" mass="27602">MLDVLNTINFLPLAELEVGQHFYWELGSFKIHGQILLTSWFVIALILLAAFISSLNVQRIPSGMQNFMESVLEFIRSLTKDQIGEKDYRPWVPFIGTLFLFIFVSNWSGALVPWKVIELPSGELAAPTSDINTTVALALLTSIAYFYAGISKKGLGYFAGYAEPVPFMVPFKIIEDFTKPLSLSFRLFGNILADELVVGVLVLLVPLFIPLPLMVLGLFLSAIQALIFATLAANYIGEALEEHGAEDHD</sequence>
<keyword id="KW-0066">ATP synthesis</keyword>
<keyword id="KW-0138">CF(0)</keyword>
<keyword id="KW-0375">Hydrogen ion transport</keyword>
<keyword id="KW-0406">Ion transport</keyword>
<keyword id="KW-0472">Membrane</keyword>
<keyword id="KW-0793">Thylakoid</keyword>
<keyword id="KW-0812">Transmembrane</keyword>
<keyword id="KW-1133">Transmembrane helix</keyword>
<keyword id="KW-0813">Transport</keyword>
<dbReference type="EMBL" id="CP000393">
    <property type="protein sequence ID" value="ABG51433.1"/>
    <property type="molecule type" value="Genomic_DNA"/>
</dbReference>
<dbReference type="RefSeq" id="WP_011611802.1">
    <property type="nucleotide sequence ID" value="NC_008312.1"/>
</dbReference>
<dbReference type="SMR" id="Q112Z1"/>
<dbReference type="STRING" id="203124.Tery_2204"/>
<dbReference type="KEGG" id="ter:Tery_2204"/>
<dbReference type="eggNOG" id="COG0356">
    <property type="taxonomic scope" value="Bacteria"/>
</dbReference>
<dbReference type="HOGENOM" id="CLU_041018_2_4_3"/>
<dbReference type="OrthoDB" id="9789241at2"/>
<dbReference type="GO" id="GO:0031676">
    <property type="term" value="C:plasma membrane-derived thylakoid membrane"/>
    <property type="evidence" value="ECO:0007669"/>
    <property type="project" value="UniProtKB-SubCell"/>
</dbReference>
<dbReference type="GO" id="GO:0045259">
    <property type="term" value="C:proton-transporting ATP synthase complex"/>
    <property type="evidence" value="ECO:0007669"/>
    <property type="project" value="UniProtKB-KW"/>
</dbReference>
<dbReference type="GO" id="GO:0046933">
    <property type="term" value="F:proton-transporting ATP synthase activity, rotational mechanism"/>
    <property type="evidence" value="ECO:0007669"/>
    <property type="project" value="UniProtKB-UniRule"/>
</dbReference>
<dbReference type="CDD" id="cd00310">
    <property type="entry name" value="ATP-synt_Fo_a_6"/>
    <property type="match status" value="1"/>
</dbReference>
<dbReference type="FunFam" id="1.20.120.220:FF:000001">
    <property type="entry name" value="ATP synthase subunit a, chloroplastic"/>
    <property type="match status" value="1"/>
</dbReference>
<dbReference type="Gene3D" id="1.20.120.220">
    <property type="entry name" value="ATP synthase, F0 complex, subunit A"/>
    <property type="match status" value="1"/>
</dbReference>
<dbReference type="HAMAP" id="MF_01393">
    <property type="entry name" value="ATP_synth_a_bact"/>
    <property type="match status" value="1"/>
</dbReference>
<dbReference type="InterPro" id="IPR045082">
    <property type="entry name" value="ATP_syn_F0_a_bact/chloroplast"/>
</dbReference>
<dbReference type="InterPro" id="IPR000568">
    <property type="entry name" value="ATP_synth_F0_asu"/>
</dbReference>
<dbReference type="InterPro" id="IPR023011">
    <property type="entry name" value="ATP_synth_F0_asu_AS"/>
</dbReference>
<dbReference type="InterPro" id="IPR035908">
    <property type="entry name" value="F0_ATP_A_sf"/>
</dbReference>
<dbReference type="NCBIfam" id="TIGR01131">
    <property type="entry name" value="ATP_synt_6_or_A"/>
    <property type="match status" value="1"/>
</dbReference>
<dbReference type="PANTHER" id="PTHR42823">
    <property type="entry name" value="ATP SYNTHASE SUBUNIT A, CHLOROPLASTIC"/>
    <property type="match status" value="1"/>
</dbReference>
<dbReference type="PANTHER" id="PTHR42823:SF3">
    <property type="entry name" value="ATP SYNTHASE SUBUNIT A, CHLOROPLASTIC"/>
    <property type="match status" value="1"/>
</dbReference>
<dbReference type="Pfam" id="PF00119">
    <property type="entry name" value="ATP-synt_A"/>
    <property type="match status" value="1"/>
</dbReference>
<dbReference type="PRINTS" id="PR00123">
    <property type="entry name" value="ATPASEA"/>
</dbReference>
<dbReference type="SUPFAM" id="SSF81336">
    <property type="entry name" value="F1F0 ATP synthase subunit A"/>
    <property type="match status" value="1"/>
</dbReference>
<dbReference type="PROSITE" id="PS00449">
    <property type="entry name" value="ATPASE_A"/>
    <property type="match status" value="1"/>
</dbReference>
<gene>
    <name evidence="1" type="primary">atpB</name>
    <name evidence="1" type="synonym">atpI</name>
    <name type="ordered locus">Tery_2204</name>
</gene>
<reference key="1">
    <citation type="journal article" date="2015" name="Proc. Natl. Acad. Sci. U.S.A.">
        <title>Trichodesmium genome maintains abundant, widespread noncoding DNA in situ, despite oligotrophic lifestyle.</title>
        <authorList>
            <person name="Walworth N."/>
            <person name="Pfreundt U."/>
            <person name="Nelson W.C."/>
            <person name="Mincer T."/>
            <person name="Heidelberg J.F."/>
            <person name="Fu F."/>
            <person name="Waterbury J.B."/>
            <person name="Glavina del Rio T."/>
            <person name="Goodwin L."/>
            <person name="Kyrpides N.C."/>
            <person name="Land M.L."/>
            <person name="Woyke T."/>
            <person name="Hutchins D.A."/>
            <person name="Hess W.R."/>
            <person name="Webb E.A."/>
        </authorList>
    </citation>
    <scope>NUCLEOTIDE SEQUENCE [LARGE SCALE GENOMIC DNA]</scope>
    <source>
        <strain>IMS101</strain>
    </source>
</reference>